<evidence type="ECO:0000255" key="1">
    <source>
        <dbReference type="HAMAP-Rule" id="MF_00050"/>
    </source>
</evidence>
<protein>
    <recommendedName>
        <fullName evidence="1">Elongation factor Ts</fullName>
        <shortName evidence="1">EF-Ts</shortName>
    </recommendedName>
</protein>
<keyword id="KW-0963">Cytoplasm</keyword>
<keyword id="KW-0251">Elongation factor</keyword>
<keyword id="KW-0648">Protein biosynthesis</keyword>
<gene>
    <name evidence="1" type="primary">tsf</name>
    <name type="ordered locus">Sputcn32_1349</name>
</gene>
<feature type="chain" id="PRO_1000006178" description="Elongation factor Ts">
    <location>
        <begin position="1"/>
        <end position="283"/>
    </location>
</feature>
<feature type="region of interest" description="Involved in Mg(2+) ion dislocation from EF-Tu" evidence="1">
    <location>
        <begin position="79"/>
        <end position="82"/>
    </location>
</feature>
<accession>A4Y544</accession>
<dbReference type="EMBL" id="CP000681">
    <property type="protein sequence ID" value="ABP75077.1"/>
    <property type="molecule type" value="Genomic_DNA"/>
</dbReference>
<dbReference type="SMR" id="A4Y544"/>
<dbReference type="STRING" id="319224.Sputcn32_1349"/>
<dbReference type="KEGG" id="spc:Sputcn32_1349"/>
<dbReference type="eggNOG" id="COG0264">
    <property type="taxonomic scope" value="Bacteria"/>
</dbReference>
<dbReference type="HOGENOM" id="CLU_047155_0_2_6"/>
<dbReference type="GO" id="GO:0005737">
    <property type="term" value="C:cytoplasm"/>
    <property type="evidence" value="ECO:0007669"/>
    <property type="project" value="UniProtKB-SubCell"/>
</dbReference>
<dbReference type="GO" id="GO:0003746">
    <property type="term" value="F:translation elongation factor activity"/>
    <property type="evidence" value="ECO:0007669"/>
    <property type="project" value="UniProtKB-UniRule"/>
</dbReference>
<dbReference type="CDD" id="cd14275">
    <property type="entry name" value="UBA_EF-Ts"/>
    <property type="match status" value="1"/>
</dbReference>
<dbReference type="FunFam" id="1.10.286.20:FF:000001">
    <property type="entry name" value="Elongation factor Ts"/>
    <property type="match status" value="1"/>
</dbReference>
<dbReference type="FunFam" id="1.10.8.10:FF:000001">
    <property type="entry name" value="Elongation factor Ts"/>
    <property type="match status" value="1"/>
</dbReference>
<dbReference type="FunFam" id="3.30.479.20:FF:000001">
    <property type="entry name" value="Elongation factor Ts"/>
    <property type="match status" value="1"/>
</dbReference>
<dbReference type="Gene3D" id="1.10.286.20">
    <property type="match status" value="1"/>
</dbReference>
<dbReference type="Gene3D" id="1.10.8.10">
    <property type="entry name" value="DNA helicase RuvA subunit, C-terminal domain"/>
    <property type="match status" value="1"/>
</dbReference>
<dbReference type="Gene3D" id="3.30.479.20">
    <property type="entry name" value="Elongation factor Ts, dimerisation domain"/>
    <property type="match status" value="2"/>
</dbReference>
<dbReference type="HAMAP" id="MF_00050">
    <property type="entry name" value="EF_Ts"/>
    <property type="match status" value="1"/>
</dbReference>
<dbReference type="InterPro" id="IPR036402">
    <property type="entry name" value="EF-Ts_dimer_sf"/>
</dbReference>
<dbReference type="InterPro" id="IPR001816">
    <property type="entry name" value="Transl_elong_EFTs/EF1B"/>
</dbReference>
<dbReference type="InterPro" id="IPR014039">
    <property type="entry name" value="Transl_elong_EFTs/EF1B_dimer"/>
</dbReference>
<dbReference type="InterPro" id="IPR018101">
    <property type="entry name" value="Transl_elong_Ts_CS"/>
</dbReference>
<dbReference type="InterPro" id="IPR009060">
    <property type="entry name" value="UBA-like_sf"/>
</dbReference>
<dbReference type="NCBIfam" id="TIGR00116">
    <property type="entry name" value="tsf"/>
    <property type="match status" value="1"/>
</dbReference>
<dbReference type="PANTHER" id="PTHR11741">
    <property type="entry name" value="ELONGATION FACTOR TS"/>
    <property type="match status" value="1"/>
</dbReference>
<dbReference type="PANTHER" id="PTHR11741:SF0">
    <property type="entry name" value="ELONGATION FACTOR TS, MITOCHONDRIAL"/>
    <property type="match status" value="1"/>
</dbReference>
<dbReference type="Pfam" id="PF00889">
    <property type="entry name" value="EF_TS"/>
    <property type="match status" value="1"/>
</dbReference>
<dbReference type="SUPFAM" id="SSF54713">
    <property type="entry name" value="Elongation factor Ts (EF-Ts), dimerisation domain"/>
    <property type="match status" value="2"/>
</dbReference>
<dbReference type="SUPFAM" id="SSF46934">
    <property type="entry name" value="UBA-like"/>
    <property type="match status" value="1"/>
</dbReference>
<dbReference type="PROSITE" id="PS01126">
    <property type="entry name" value="EF_TS_1"/>
    <property type="match status" value="1"/>
</dbReference>
<dbReference type="PROSITE" id="PS01127">
    <property type="entry name" value="EF_TS_2"/>
    <property type="match status" value="1"/>
</dbReference>
<organism>
    <name type="scientific">Shewanella putrefaciens (strain CN-32 / ATCC BAA-453)</name>
    <dbReference type="NCBI Taxonomy" id="319224"/>
    <lineage>
        <taxon>Bacteria</taxon>
        <taxon>Pseudomonadati</taxon>
        <taxon>Pseudomonadota</taxon>
        <taxon>Gammaproteobacteria</taxon>
        <taxon>Alteromonadales</taxon>
        <taxon>Shewanellaceae</taxon>
        <taxon>Shewanella</taxon>
    </lineage>
</organism>
<reference key="1">
    <citation type="submission" date="2007-04" db="EMBL/GenBank/DDBJ databases">
        <title>Complete sequence of Shewanella putrefaciens CN-32.</title>
        <authorList>
            <consortium name="US DOE Joint Genome Institute"/>
            <person name="Copeland A."/>
            <person name="Lucas S."/>
            <person name="Lapidus A."/>
            <person name="Barry K."/>
            <person name="Detter J.C."/>
            <person name="Glavina del Rio T."/>
            <person name="Hammon N."/>
            <person name="Israni S."/>
            <person name="Dalin E."/>
            <person name="Tice H."/>
            <person name="Pitluck S."/>
            <person name="Chain P."/>
            <person name="Malfatti S."/>
            <person name="Shin M."/>
            <person name="Vergez L."/>
            <person name="Schmutz J."/>
            <person name="Larimer F."/>
            <person name="Land M."/>
            <person name="Hauser L."/>
            <person name="Kyrpides N."/>
            <person name="Mikhailova N."/>
            <person name="Romine M.F."/>
            <person name="Fredrickson J."/>
            <person name="Tiedje J."/>
            <person name="Richardson P."/>
        </authorList>
    </citation>
    <scope>NUCLEOTIDE SEQUENCE [LARGE SCALE GENOMIC DNA]</scope>
    <source>
        <strain>CN-32 / ATCC BAA-453</strain>
    </source>
</reference>
<sequence length="283" mass="30372">MAISAAQVKELRDRTGAGMMDCKKALEETNGDMELAIDNMRKSGAAKAAKKAGNIAADGTILIKNGEGFAVLLEVNCQTDFVAKDANFLGFANSVLDVAAASKVALEDLKAQFEEARVALVAKIGENINVRRVEYIDGAKLASYRHGERIGVVVTGDADDETLKHIAMHVAASKPEYVNPEDVPADVVAREQALQIEISMNEGKPADIAEKMVVGRMKKFTGEISLTGQAYIMEPKKTVGEFLKEKGAKVTNFIRLEVGEGIEKKEEDFAAEVAAQIAASKKA</sequence>
<comment type="function">
    <text evidence="1">Associates with the EF-Tu.GDP complex and induces the exchange of GDP to GTP. It remains bound to the aminoacyl-tRNA.EF-Tu.GTP complex up to the GTP hydrolysis stage on the ribosome.</text>
</comment>
<comment type="subcellular location">
    <subcellularLocation>
        <location evidence="1">Cytoplasm</location>
    </subcellularLocation>
</comment>
<comment type="similarity">
    <text evidence="1">Belongs to the EF-Ts family.</text>
</comment>
<proteinExistence type="inferred from homology"/>
<name>EFTS_SHEPC</name>